<protein>
    <recommendedName>
        <fullName>Hyaluronan synthase 1</fullName>
        <ecNumber>2.4.1.212</ecNumber>
    </recommendedName>
    <alternativeName>
        <fullName>Hyaluronate synthase 1</fullName>
    </alternativeName>
    <alternativeName>
        <fullName>Hyaluronic acid synthase 1</fullName>
        <shortName>HA synthase 1</shortName>
        <shortName>HuHAS1</shortName>
    </alternativeName>
</protein>
<name>HYAS1_HUMAN</name>
<comment type="function">
    <text evidence="1">Catalyzes the addition of GlcNAc or GlcUA monosaccharides to the nascent hyaluronan polymer. Therefore, it is essential to hyaluronan synthesis a major component of most extracellular matrices that has a structural role in tissues architectures and regulates cell adhesion, migration and differentiation. This is one of the isozymes catalyzing that reaction. Also able to catalyze the synthesis of chito-oligosaccharide depending on the substrate (By similarity).</text>
</comment>
<comment type="catalytic activity">
    <reaction>
        <text>[hyaluronan](n) + UDP-N-acetyl-alpha-D-glucosamine = N-acetyl-beta-D-glucosaminyl-(1-&gt;4)-[hyaluronan](n) + UDP + H(+)</text>
        <dbReference type="Rhea" id="RHEA:20465"/>
        <dbReference type="Rhea" id="RHEA-COMP:12583"/>
        <dbReference type="Rhea" id="RHEA-COMP:12585"/>
        <dbReference type="ChEBI" id="CHEBI:15378"/>
        <dbReference type="ChEBI" id="CHEBI:57705"/>
        <dbReference type="ChEBI" id="CHEBI:58223"/>
        <dbReference type="ChEBI" id="CHEBI:132153"/>
        <dbReference type="ChEBI" id="CHEBI:132154"/>
        <dbReference type="EC" id="2.4.1.212"/>
    </reaction>
</comment>
<comment type="catalytic activity">
    <reaction>
        <text>N-acetyl-beta-D-glucosaminyl-(1-&gt;4)-[hyaluronan](n) + UDP-alpha-D-glucuronate = [hyaluronan](n+1) + UDP + H(+)</text>
        <dbReference type="Rhea" id="RHEA:12528"/>
        <dbReference type="Rhea" id="RHEA-COMP:12585"/>
        <dbReference type="Rhea" id="RHEA-COMP:12587"/>
        <dbReference type="ChEBI" id="CHEBI:15378"/>
        <dbReference type="ChEBI" id="CHEBI:58052"/>
        <dbReference type="ChEBI" id="CHEBI:58223"/>
        <dbReference type="ChEBI" id="CHEBI:132153"/>
        <dbReference type="ChEBI" id="CHEBI:132154"/>
        <dbReference type="EC" id="2.4.1.212"/>
    </reaction>
</comment>
<comment type="cofactor">
    <cofactor>
        <name>Mg(2+)</name>
        <dbReference type="ChEBI" id="CHEBI:18420"/>
    </cofactor>
</comment>
<comment type="pathway">
    <text>Glycan biosynthesis; hyaluronan biosynthesis.</text>
</comment>
<comment type="interaction">
    <interactant intactId="EBI-1052423">
        <id>Q92839</id>
    </interactant>
    <interactant intactId="EBI-1052423">
        <id>Q92839</id>
        <label>HAS1</label>
    </interactant>
    <organismsDiffer>false</organismsDiffer>
    <experiments>9</experiments>
</comment>
<comment type="interaction">
    <interactant intactId="EBI-1052423">
        <id>Q92839</id>
    </interactant>
    <interactant intactId="EBI-16628852">
        <id>Q92819</id>
        <label>HAS2</label>
    </interactant>
    <organismsDiffer>false</organismsDiffer>
    <experiments>9</experiments>
</comment>
<comment type="interaction">
    <interactant intactId="EBI-1052423">
        <id>Q92839</id>
    </interactant>
    <interactant intactId="EBI-16628799">
        <id>O00219</id>
        <label>HAS3</label>
    </interactant>
    <organismsDiffer>false</organismsDiffer>
    <experiments>9</experiments>
</comment>
<comment type="subcellular location">
    <subcellularLocation>
        <location evidence="5">Membrane</location>
        <topology evidence="5">Multi-pass membrane protein</topology>
    </subcellularLocation>
</comment>
<comment type="tissue specificity">
    <text evidence="3">Widely expressed. Highly expressed in ovary followed by spleen, thymus, prostate, testes and large intestine. Weakly expressed in small intestine.</text>
</comment>
<comment type="similarity">
    <text evidence="5">Belongs to the NodC/HAS family.</text>
</comment>
<comment type="sequence caution" evidence="5">
    <conflict type="erroneous initiation">
        <sequence resource="EMBL-CDS" id="BAA12351"/>
    </conflict>
    <text>Truncated N-terminus.</text>
</comment>
<accession>Q92839</accession>
<accession>Q14470</accession>
<accession>Q9NS49</accession>
<dbReference type="EC" id="2.4.1.212"/>
<dbReference type="EMBL" id="D84424">
    <property type="protein sequence ID" value="BAA12351.1"/>
    <property type="status" value="ALT_INIT"/>
    <property type="molecule type" value="mRNA"/>
</dbReference>
<dbReference type="EMBL" id="U59269">
    <property type="protein sequence ID" value="AAC50706.1"/>
    <property type="molecule type" value="mRNA"/>
</dbReference>
<dbReference type="EMBL" id="AC018755">
    <property type="protein sequence ID" value="AAF87845.1"/>
    <property type="molecule type" value="Genomic_DNA"/>
</dbReference>
<dbReference type="EMBL" id="CH471135">
    <property type="protein sequence ID" value="EAW72038.1"/>
    <property type="molecule type" value="Genomic_DNA"/>
</dbReference>
<dbReference type="CCDS" id="CCDS12838.1"/>
<dbReference type="PIR" id="JC4812">
    <property type="entry name" value="JC4812"/>
</dbReference>
<dbReference type="RefSeq" id="NP_001514.2">
    <property type="nucleotide sequence ID" value="NM_001523.4"/>
</dbReference>
<dbReference type="SMR" id="Q92839"/>
<dbReference type="BioGRID" id="109286">
    <property type="interactions" value="11"/>
</dbReference>
<dbReference type="ComplexPortal" id="CPX-8410">
    <property type="entry name" value="HAS1-HAS3 hyaluronan biosynthesis complex"/>
</dbReference>
<dbReference type="ComplexPortal" id="CPX-8422">
    <property type="entry name" value="HAS1-HAS2 hyaluronan biosynthesis complex"/>
</dbReference>
<dbReference type="ComplexPortal" id="CPX-8481">
    <property type="entry name" value="HAS1 hyaluronan biosynthesis complex"/>
</dbReference>
<dbReference type="CORUM" id="Q92839"/>
<dbReference type="FunCoup" id="Q92839">
    <property type="interactions" value="35"/>
</dbReference>
<dbReference type="IntAct" id="Q92839">
    <property type="interactions" value="2"/>
</dbReference>
<dbReference type="STRING" id="9606.ENSP00000222115"/>
<dbReference type="CAZy" id="GT2">
    <property type="family name" value="Glycosyltransferase Family 2"/>
</dbReference>
<dbReference type="TCDB" id="4.D.1.1.10">
    <property type="family name" value="the putative vectorial glycosyl polymerization (vgp) family"/>
</dbReference>
<dbReference type="GlyGen" id="Q92839">
    <property type="glycosylation" value="1 site"/>
</dbReference>
<dbReference type="iPTMnet" id="Q92839"/>
<dbReference type="PhosphoSitePlus" id="Q92839"/>
<dbReference type="BioMuta" id="HAS1"/>
<dbReference type="DMDM" id="209572627"/>
<dbReference type="jPOST" id="Q92839"/>
<dbReference type="MassIVE" id="Q92839"/>
<dbReference type="PaxDb" id="9606-ENSP00000222115"/>
<dbReference type="PeptideAtlas" id="Q92839"/>
<dbReference type="ProteomicsDB" id="75530"/>
<dbReference type="Antibodypedia" id="52809">
    <property type="antibodies" value="224 antibodies from 31 providers"/>
</dbReference>
<dbReference type="DNASU" id="3036"/>
<dbReference type="Ensembl" id="ENST00000222115.5">
    <property type="protein sequence ID" value="ENSP00000222115.1"/>
    <property type="gene ID" value="ENSG00000105509.11"/>
</dbReference>
<dbReference type="GeneID" id="3036"/>
<dbReference type="KEGG" id="hsa:3036"/>
<dbReference type="UCSC" id="uc002pxo.1">
    <property type="organism name" value="human"/>
</dbReference>
<dbReference type="AGR" id="HGNC:4818"/>
<dbReference type="CTD" id="3036"/>
<dbReference type="DisGeNET" id="3036"/>
<dbReference type="GeneCards" id="HAS1"/>
<dbReference type="HGNC" id="HGNC:4818">
    <property type="gene designation" value="HAS1"/>
</dbReference>
<dbReference type="HPA" id="ENSG00000105509">
    <property type="expression patterns" value="Tissue enhanced (adipose tissue, ovary)"/>
</dbReference>
<dbReference type="MIM" id="601463">
    <property type="type" value="gene"/>
</dbReference>
<dbReference type="neXtProt" id="NX_Q92839"/>
<dbReference type="OpenTargets" id="ENSG00000105509"/>
<dbReference type="PharmGKB" id="PA29194"/>
<dbReference type="VEuPathDB" id="HostDB:ENSG00000105509"/>
<dbReference type="eggNOG" id="KOG2571">
    <property type="taxonomic scope" value="Eukaryota"/>
</dbReference>
<dbReference type="GeneTree" id="ENSGT00390000010337"/>
<dbReference type="InParanoid" id="Q92839"/>
<dbReference type="OrthoDB" id="9876900at2759"/>
<dbReference type="PAN-GO" id="Q92839">
    <property type="GO annotations" value="5 GO annotations based on evolutionary models"/>
</dbReference>
<dbReference type="PhylomeDB" id="Q92839"/>
<dbReference type="TreeFam" id="TF332506"/>
<dbReference type="BRENDA" id="2.4.1.212">
    <property type="organism ID" value="2681"/>
</dbReference>
<dbReference type="PathwayCommons" id="Q92839"/>
<dbReference type="Reactome" id="R-HSA-2142850">
    <property type="pathway name" value="Hyaluronan biosynthesis and export"/>
</dbReference>
<dbReference type="SignaLink" id="Q92839"/>
<dbReference type="UniPathway" id="UPA00341"/>
<dbReference type="BioGRID-ORCS" id="3036">
    <property type="hits" value="17 hits in 1150 CRISPR screens"/>
</dbReference>
<dbReference type="GeneWiki" id="HAS1"/>
<dbReference type="GenomeRNAi" id="3036"/>
<dbReference type="Pharos" id="Q92839">
    <property type="development level" value="Tbio"/>
</dbReference>
<dbReference type="PRO" id="PR:Q92839"/>
<dbReference type="Proteomes" id="UP000005640">
    <property type="component" value="Chromosome 19"/>
</dbReference>
<dbReference type="RNAct" id="Q92839">
    <property type="molecule type" value="protein"/>
</dbReference>
<dbReference type="Bgee" id="ENSG00000105509">
    <property type="expression patterns" value="Expressed in male germ line stem cell (sensu Vertebrata) in testis and 112 other cell types or tissues"/>
</dbReference>
<dbReference type="ExpressionAtlas" id="Q92839">
    <property type="expression patterns" value="baseline and differential"/>
</dbReference>
<dbReference type="GO" id="GO:0005794">
    <property type="term" value="C:Golgi apparatus"/>
    <property type="evidence" value="ECO:0000314"/>
    <property type="project" value="UniProtKB"/>
</dbReference>
<dbReference type="GO" id="GO:0005886">
    <property type="term" value="C:plasma membrane"/>
    <property type="evidence" value="ECO:0000314"/>
    <property type="project" value="UniProtKB"/>
</dbReference>
<dbReference type="GO" id="GO:0050501">
    <property type="term" value="F:hyaluronan synthase activity"/>
    <property type="evidence" value="ECO:0000250"/>
    <property type="project" value="UniProtKB"/>
</dbReference>
<dbReference type="GO" id="GO:0042802">
    <property type="term" value="F:identical protein binding"/>
    <property type="evidence" value="ECO:0000353"/>
    <property type="project" value="IntAct"/>
</dbReference>
<dbReference type="GO" id="GO:0007155">
    <property type="term" value="P:cell adhesion"/>
    <property type="evidence" value="ECO:0000304"/>
    <property type="project" value="ProtInc"/>
</dbReference>
<dbReference type="GO" id="GO:0036120">
    <property type="term" value="P:cellular response to platelet-derived growth factor stimulus"/>
    <property type="evidence" value="ECO:0000314"/>
    <property type="project" value="UniProtKB"/>
</dbReference>
<dbReference type="GO" id="GO:0085029">
    <property type="term" value="P:extracellular matrix assembly"/>
    <property type="evidence" value="ECO:0000250"/>
    <property type="project" value="UniProtKB"/>
</dbReference>
<dbReference type="GO" id="GO:0006024">
    <property type="term" value="P:glycosaminoglycan biosynthetic process"/>
    <property type="evidence" value="ECO:0000304"/>
    <property type="project" value="ProtInc"/>
</dbReference>
<dbReference type="GO" id="GO:0030213">
    <property type="term" value="P:hyaluronan biosynthetic process"/>
    <property type="evidence" value="ECO:0000318"/>
    <property type="project" value="GO_Central"/>
</dbReference>
<dbReference type="GO" id="GO:0010764">
    <property type="term" value="P:negative regulation of fibroblast migration"/>
    <property type="evidence" value="ECO:0000315"/>
    <property type="project" value="UniProtKB"/>
</dbReference>
<dbReference type="GO" id="GO:0000271">
    <property type="term" value="P:polysaccharide biosynthetic process"/>
    <property type="evidence" value="ECO:0000250"/>
    <property type="project" value="UniProtKB"/>
</dbReference>
<dbReference type="FunFam" id="3.90.550.10:FF:000108">
    <property type="entry name" value="hyaluronan synthase 1"/>
    <property type="match status" value="1"/>
</dbReference>
<dbReference type="Gene3D" id="3.90.550.10">
    <property type="entry name" value="Spore Coat Polysaccharide Biosynthesis Protein SpsA, Chain A"/>
    <property type="match status" value="1"/>
</dbReference>
<dbReference type="InterPro" id="IPR029044">
    <property type="entry name" value="Nucleotide-diphossugar_trans"/>
</dbReference>
<dbReference type="PANTHER" id="PTHR22913">
    <property type="entry name" value="HYALURONAN SYNTHASE"/>
    <property type="match status" value="1"/>
</dbReference>
<dbReference type="PANTHER" id="PTHR22913:SF4">
    <property type="entry name" value="HYALURONAN SYNTHASE 1"/>
    <property type="match status" value="1"/>
</dbReference>
<dbReference type="Pfam" id="PF13641">
    <property type="entry name" value="Glyco_tranf_2_3"/>
    <property type="match status" value="1"/>
</dbReference>
<dbReference type="SUPFAM" id="SSF53448">
    <property type="entry name" value="Nucleotide-diphospho-sugar transferases"/>
    <property type="match status" value="1"/>
</dbReference>
<evidence type="ECO:0000250" key="1"/>
<evidence type="ECO:0000255" key="2"/>
<evidence type="ECO:0000269" key="3">
    <source>
    </source>
</evidence>
<evidence type="ECO:0000269" key="4">
    <source>
    </source>
</evidence>
<evidence type="ECO:0000305" key="5"/>
<feature type="chain" id="PRO_0000197169" description="Hyaluronan synthase 1">
    <location>
        <begin position="1"/>
        <end position="578"/>
    </location>
</feature>
<feature type="topological domain" description="Cytoplasmic" evidence="2">
    <location>
        <begin position="1"/>
        <end position="25"/>
    </location>
</feature>
<feature type="transmembrane region" description="Helical; Name=1" evidence="2">
    <location>
        <begin position="26"/>
        <end position="46"/>
    </location>
</feature>
<feature type="topological domain" description="Extracellular" evidence="2">
    <location>
        <begin position="47"/>
        <end position="52"/>
    </location>
</feature>
<feature type="transmembrane region" description="Helical; Name=2" evidence="2">
    <location>
        <begin position="53"/>
        <end position="73"/>
    </location>
</feature>
<feature type="topological domain" description="Cytoplasmic" evidence="2">
    <location>
        <begin position="74"/>
        <end position="399"/>
    </location>
</feature>
<feature type="transmembrane region" description="Helical; Name=3" evidence="2">
    <location>
        <begin position="400"/>
        <end position="420"/>
    </location>
</feature>
<feature type="topological domain" description="Extracellular" evidence="2">
    <location>
        <begin position="421"/>
        <end position="430"/>
    </location>
</feature>
<feature type="transmembrane region" description="Helical; Name=4" evidence="2">
    <location>
        <begin position="431"/>
        <end position="451"/>
    </location>
</feature>
<feature type="topological domain" description="Cytoplasmic" evidence="2">
    <location>
        <begin position="452"/>
        <end position="457"/>
    </location>
</feature>
<feature type="transmembrane region" description="Helical; Name=5" evidence="2">
    <location>
        <begin position="458"/>
        <end position="478"/>
    </location>
</feature>
<feature type="topological domain" description="Extracellular" evidence="2">
    <location>
        <begin position="479"/>
        <end position="497"/>
    </location>
</feature>
<feature type="transmembrane region" description="Helical; Name=6" evidence="2">
    <location>
        <begin position="498"/>
        <end position="518"/>
    </location>
</feature>
<feature type="topological domain" description="Cytoplasmic" evidence="2">
    <location>
        <begin position="519"/>
        <end position="540"/>
    </location>
</feature>
<feature type="transmembrane region" description="Helical; Name=7" evidence="2">
    <location>
        <begin position="541"/>
        <end position="561"/>
    </location>
</feature>
<feature type="topological domain" description="Extracellular" evidence="2">
    <location>
        <begin position="562"/>
        <end position="578"/>
    </location>
</feature>
<feature type="sequence variant" id="VAR_047025" description="In dbSNP:rs7248778." evidence="3 4">
    <original>C</original>
    <variation>R</variation>
    <location>
        <position position="14"/>
    </location>
</feature>
<feature type="sequence conflict" description="In Ref. 1; BAA12351." evidence="5" ref="1">
    <original>MR</original>
    <variation>RS</variation>
    <location>
        <begin position="1"/>
        <end position="2"/>
    </location>
</feature>
<feature type="sequence conflict" description="In Ref. 1; BAA12351." evidence="5" ref="1">
    <original>G</original>
    <variation>A</variation>
    <location>
        <position position="34"/>
    </location>
</feature>
<feature type="sequence conflict" description="In Ref. 1; BAA12351." evidence="5" ref="1">
    <original>L</original>
    <variation>V</variation>
    <location>
        <position position="128"/>
    </location>
</feature>
<proteinExistence type="evidence at protein level"/>
<keyword id="KW-0328">Glycosyltransferase</keyword>
<keyword id="KW-0472">Membrane</keyword>
<keyword id="KW-1267">Proteomics identification</keyword>
<keyword id="KW-1185">Reference proteome</keyword>
<keyword id="KW-0808">Transferase</keyword>
<keyword id="KW-0812">Transmembrane</keyword>
<keyword id="KW-1133">Transmembrane helix</keyword>
<organism>
    <name type="scientific">Homo sapiens</name>
    <name type="common">Human</name>
    <dbReference type="NCBI Taxonomy" id="9606"/>
    <lineage>
        <taxon>Eukaryota</taxon>
        <taxon>Metazoa</taxon>
        <taxon>Chordata</taxon>
        <taxon>Craniata</taxon>
        <taxon>Vertebrata</taxon>
        <taxon>Euteleostomi</taxon>
        <taxon>Mammalia</taxon>
        <taxon>Eutheria</taxon>
        <taxon>Euarchontoglires</taxon>
        <taxon>Primates</taxon>
        <taxon>Haplorrhini</taxon>
        <taxon>Catarrhini</taxon>
        <taxon>Hominidae</taxon>
        <taxon>Homo</taxon>
    </lineage>
</organism>
<gene>
    <name type="primary">HAS1</name>
    <name type="synonym">HAS</name>
</gene>
<reference key="1">
    <citation type="journal article" date="1996" name="Biochem. Biophys. Res. Commun.">
        <title>Molecular cloning of human hyaluronan synthase.</title>
        <authorList>
            <person name="Itano N."/>
            <person name="Kimata K."/>
        </authorList>
    </citation>
    <scope>NUCLEOTIDE SEQUENCE [MRNA]</scope>
    <scope>VARIANT ARG-14</scope>
    <scope>TISSUE SPECIFICITY</scope>
    <source>
        <tissue>Fetal brain</tissue>
    </source>
</reference>
<reference key="2">
    <citation type="journal article" date="1996" name="J. Biol. Chem.">
        <title>Functional cloning of the cDNA for a human hyaluronan synthase.</title>
        <authorList>
            <person name="Shyjan A.M."/>
            <person name="Heldin P."/>
            <person name="Butcher E.C."/>
            <person name="Yoshino T."/>
            <person name="Briskin M.J."/>
        </authorList>
    </citation>
    <scope>NUCLEOTIDE SEQUENCE [MRNA]</scope>
    <scope>VARIANT ARG-14</scope>
    <source>
        <tissue>Lymph node</tissue>
    </source>
</reference>
<reference key="3">
    <citation type="journal article" date="2004" name="Nature">
        <title>The DNA sequence and biology of human chromosome 19.</title>
        <authorList>
            <person name="Grimwood J."/>
            <person name="Gordon L.A."/>
            <person name="Olsen A.S."/>
            <person name="Terry A."/>
            <person name="Schmutz J."/>
            <person name="Lamerdin J.E."/>
            <person name="Hellsten U."/>
            <person name="Goodstein D."/>
            <person name="Couronne O."/>
            <person name="Tran-Gyamfi M."/>
            <person name="Aerts A."/>
            <person name="Altherr M."/>
            <person name="Ashworth L."/>
            <person name="Bajorek E."/>
            <person name="Black S."/>
            <person name="Branscomb E."/>
            <person name="Caenepeel S."/>
            <person name="Carrano A.V."/>
            <person name="Caoile C."/>
            <person name="Chan Y.M."/>
            <person name="Christensen M."/>
            <person name="Cleland C.A."/>
            <person name="Copeland A."/>
            <person name="Dalin E."/>
            <person name="Dehal P."/>
            <person name="Denys M."/>
            <person name="Detter J.C."/>
            <person name="Escobar J."/>
            <person name="Flowers D."/>
            <person name="Fotopulos D."/>
            <person name="Garcia C."/>
            <person name="Georgescu A.M."/>
            <person name="Glavina T."/>
            <person name="Gomez M."/>
            <person name="Gonzales E."/>
            <person name="Groza M."/>
            <person name="Hammon N."/>
            <person name="Hawkins T."/>
            <person name="Haydu L."/>
            <person name="Ho I."/>
            <person name="Huang W."/>
            <person name="Israni S."/>
            <person name="Jett J."/>
            <person name="Kadner K."/>
            <person name="Kimball H."/>
            <person name="Kobayashi A."/>
            <person name="Larionov V."/>
            <person name="Leem S.-H."/>
            <person name="Lopez F."/>
            <person name="Lou Y."/>
            <person name="Lowry S."/>
            <person name="Malfatti S."/>
            <person name="Martinez D."/>
            <person name="McCready P.M."/>
            <person name="Medina C."/>
            <person name="Morgan J."/>
            <person name="Nelson K."/>
            <person name="Nolan M."/>
            <person name="Ovcharenko I."/>
            <person name="Pitluck S."/>
            <person name="Pollard M."/>
            <person name="Popkie A.P."/>
            <person name="Predki P."/>
            <person name="Quan G."/>
            <person name="Ramirez L."/>
            <person name="Rash S."/>
            <person name="Retterer J."/>
            <person name="Rodriguez A."/>
            <person name="Rogers S."/>
            <person name="Salamov A."/>
            <person name="Salazar A."/>
            <person name="She X."/>
            <person name="Smith D."/>
            <person name="Slezak T."/>
            <person name="Solovyev V."/>
            <person name="Thayer N."/>
            <person name="Tice H."/>
            <person name="Tsai M."/>
            <person name="Ustaszewska A."/>
            <person name="Vo N."/>
            <person name="Wagner M."/>
            <person name="Wheeler J."/>
            <person name="Wu K."/>
            <person name="Xie G."/>
            <person name="Yang J."/>
            <person name="Dubchak I."/>
            <person name="Furey T.S."/>
            <person name="DeJong P."/>
            <person name="Dickson M."/>
            <person name="Gordon D."/>
            <person name="Eichler E.E."/>
            <person name="Pennacchio L.A."/>
            <person name="Richardson P."/>
            <person name="Stubbs L."/>
            <person name="Rokhsar D.S."/>
            <person name="Myers R.M."/>
            <person name="Rubin E.M."/>
            <person name="Lucas S.M."/>
        </authorList>
    </citation>
    <scope>NUCLEOTIDE SEQUENCE [LARGE SCALE GENOMIC DNA]</scope>
</reference>
<reference key="4">
    <citation type="submission" date="2005-07" db="EMBL/GenBank/DDBJ databases">
        <authorList>
            <person name="Mural R.J."/>
            <person name="Istrail S."/>
            <person name="Sutton G.G."/>
            <person name="Florea L."/>
            <person name="Halpern A.L."/>
            <person name="Mobarry C.M."/>
            <person name="Lippert R."/>
            <person name="Walenz B."/>
            <person name="Shatkay H."/>
            <person name="Dew I."/>
            <person name="Miller J.R."/>
            <person name="Flanigan M.J."/>
            <person name="Edwards N.J."/>
            <person name="Bolanos R."/>
            <person name="Fasulo D."/>
            <person name="Halldorsson B.V."/>
            <person name="Hannenhalli S."/>
            <person name="Turner R."/>
            <person name="Yooseph S."/>
            <person name="Lu F."/>
            <person name="Nusskern D.R."/>
            <person name="Shue B.C."/>
            <person name="Zheng X.H."/>
            <person name="Zhong F."/>
            <person name="Delcher A.L."/>
            <person name="Huson D.H."/>
            <person name="Kravitz S.A."/>
            <person name="Mouchard L."/>
            <person name="Reinert K."/>
            <person name="Remington K.A."/>
            <person name="Clark A.G."/>
            <person name="Waterman M.S."/>
            <person name="Eichler E.E."/>
            <person name="Adams M.D."/>
            <person name="Hunkapiller M.W."/>
            <person name="Myers E.W."/>
            <person name="Venter J.C."/>
        </authorList>
    </citation>
    <scope>NUCLEOTIDE SEQUENCE [LARGE SCALE GENOMIC DNA]</scope>
</reference>
<sequence length="578" mass="64832">MRQQDAPKPTPAACRCSGLARRVLTIAFALLILGLMTWAYAAGVPLASDRYGLLAFGLYGAFLSAHLVAQSLFAYLEHRRVAAAARGPLDAATARSVALTISAYQEDPAYLRQCLASARALLYPRARLRVLMVVDGNRAEDLYMVDMFREVFADEDPATYVWDGNYHQPWEPAAAGAVGAGAYREVEAEDPGRLAVEALVRTRRCVCVAQRWGGKREVMYTAFKALGDSVDYVQVCDSDTRLDPMALLELVRVLDEDPRVGAVGGDVRILNPLDSWVSFLSSLRYWVAFNVERACQSYFHCVSCISGPLGLYRNNLLQQFLEAWYNQKFLGTHCTFGDDRHLTNRMLSMGYATKYTSRSRCYSETPSSFLRWLSQQTRWSKSYFREWLYNALWWHRHHAWMTYEAVVSGLFPFFVAATVLRLFYAGRPWALLWVLLCVQGVALAKAAFAAWLRGCLRMVLLSLYAPLYMCGLLPAKFLALVTMNQSGWGTSGRRKLAANYVPLLPLALWALLLLGGLVRSVAHEARADWSGPSRAAEAYHLAAGAGAYVGYWVAMLTLYWVGVRRLCRRRTGGYRVQV</sequence>